<name>VF424_ASFB7</name>
<feature type="chain" id="PRO_0000373065" description="Probable methyltransferase EP424R">
    <location>
        <begin position="1"/>
        <end position="424"/>
    </location>
</feature>
<feature type="domain" description="Adrift-type SAM-dependent 2'-O-MTase" evidence="1">
    <location>
        <begin position="104"/>
        <end position="316"/>
    </location>
</feature>
<feature type="active site" description="Proton acceptor" evidence="1">
    <location>
        <position position="269"/>
    </location>
</feature>
<feature type="binding site" evidence="1">
    <location>
        <position position="136"/>
    </location>
    <ligand>
        <name>S-adenosyl-L-methionine</name>
        <dbReference type="ChEBI" id="CHEBI:59789"/>
    </ligand>
</feature>
<feature type="binding site" evidence="1">
    <location>
        <position position="229"/>
    </location>
    <ligand>
        <name>S-adenosyl-L-methionine</name>
        <dbReference type="ChEBI" id="CHEBI:59789"/>
    </ligand>
</feature>
<sequence length="424" mass="49332">MSNYYYYYGGGRYDWLKTVEPTNFLKIGLPYQAHPLHLQHQATTTPPSILEKFKRADILLNEVKAEMDPLMLQPETEKKLYQILGSIDMFKGLRKKVEFTYNAQIVTNAWLKMYELLNTMNFNNTSQAFCNCELPGGFISAINHFNYTMMHYPTFNWVASSLYPSSETDALEDHYGLYQCNPDNWLMQSPLLKKNVDYNDGDVTIASNVKNLALRATQRLTPIHLYTADGGINVGHDYNKQEELNLKLHFGQALTGLLSLSKGGNMILKHYTLNHAFTLSLICVFSHFFEELYITKPTSSRPTNSETYIVGKNRLRLFTPKEEQILLKRLEFFNDTPLVDLSLYQNLLESIYFAVETIHLKQQIEFLNFGMKCYRHFYNKIKLLNEYLAPKKKIFQDRWRVLNKLYVLEKKHKLKLCAPQGSVA</sequence>
<organism>
    <name type="scientific">African swine fever virus (strain Badajoz 1971 Vero-adapted)</name>
    <name type="common">Ba71V</name>
    <name type="synonym">ASFV</name>
    <dbReference type="NCBI Taxonomy" id="10498"/>
    <lineage>
        <taxon>Viruses</taxon>
        <taxon>Varidnaviria</taxon>
        <taxon>Bamfordvirae</taxon>
        <taxon>Nucleocytoviricota</taxon>
        <taxon>Pokkesviricetes</taxon>
        <taxon>Asfuvirales</taxon>
        <taxon>Asfarviridae</taxon>
        <taxon>Asfivirus</taxon>
        <taxon>African swine fever virus</taxon>
    </lineage>
</organism>
<reference key="1">
    <citation type="journal article" date="1995" name="Virology">
        <title>Analysis of the complete nucleotide sequence of African swine fever virus.</title>
        <authorList>
            <person name="Yanez R.J."/>
            <person name="Rodriguez J.M."/>
            <person name="Nogal M.L."/>
            <person name="Yuste L."/>
            <person name="Enriquez C."/>
            <person name="Rodriguez J.F."/>
            <person name="Vinuela E."/>
        </authorList>
    </citation>
    <scope>NUCLEOTIDE SEQUENCE [LARGE SCALE GENOMIC DNA]</scope>
</reference>
<reference key="2">
    <citation type="journal article" date="2018" name="J. Virol.">
        <title>A Proteomic Atlas of the African Swine Fever Virus Particle.</title>
        <authorList>
            <person name="Alejo A."/>
            <person name="Matamoros T."/>
            <person name="Guerra M."/>
            <person name="Andres G."/>
        </authorList>
    </citation>
    <scope>SUBCELLULAR LOCATION</scope>
</reference>
<reference key="3">
    <citation type="journal article" date="2020" name="J. Virol.">
        <title>The African Swine Fever Virus Transcriptome.</title>
        <authorList>
            <person name="Cackett G."/>
            <person name="Matelska D."/>
            <person name="Sykora M."/>
            <person name="Portugal R."/>
            <person name="Malecki M."/>
            <person name="Baehler J."/>
            <person name="Dixon L."/>
            <person name="Werner F."/>
        </authorList>
    </citation>
    <scope>INDUCTION</scope>
</reference>
<gene>
    <name type="ordered locus">Ba71V-055</name>
    <name type="ORF">EP424R</name>
</gene>
<comment type="subcellular location">
    <subcellularLocation>
        <location evidence="2">Virion</location>
    </subcellularLocation>
</comment>
<comment type="induction">
    <text evidence="3">Expressed in the early phase of the viral replicative cycle.</text>
</comment>
<organismHost>
    <name type="scientific">Ornithodoros</name>
    <name type="common">relapsing fever ticks</name>
    <dbReference type="NCBI Taxonomy" id="6937"/>
</organismHost>
<organismHost>
    <name type="scientific">Sus scrofa</name>
    <name type="common">Pig</name>
    <dbReference type="NCBI Taxonomy" id="9823"/>
</organismHost>
<keyword id="KW-0244">Early protein</keyword>
<keyword id="KW-0489">Methyltransferase</keyword>
<keyword id="KW-1185">Reference proteome</keyword>
<keyword id="KW-0949">S-adenosyl-L-methionine</keyword>
<keyword id="KW-0808">Transferase</keyword>
<keyword id="KW-0946">Virion</keyword>
<proteinExistence type="evidence at transcript level"/>
<dbReference type="EC" id="2.1.1.-"/>
<dbReference type="EMBL" id="U18466">
    <property type="protein sequence ID" value="AAA65285.1"/>
    <property type="molecule type" value="Genomic_DNA"/>
</dbReference>
<dbReference type="RefSeq" id="NP_042749.1">
    <property type="nucleotide sequence ID" value="NC_001659.2"/>
</dbReference>
<dbReference type="SMR" id="Q65148"/>
<dbReference type="GeneID" id="22220437"/>
<dbReference type="KEGG" id="vg:22220437"/>
<dbReference type="Proteomes" id="UP000000624">
    <property type="component" value="Segment"/>
</dbReference>
<dbReference type="GO" id="GO:0044423">
    <property type="term" value="C:virion component"/>
    <property type="evidence" value="ECO:0007669"/>
    <property type="project" value="UniProtKB-KW"/>
</dbReference>
<dbReference type="GO" id="GO:0004483">
    <property type="term" value="F:mRNA (nucleoside-2'-O-)-methyltransferase activity"/>
    <property type="evidence" value="ECO:0007669"/>
    <property type="project" value="UniProtKB-ARBA"/>
</dbReference>
<dbReference type="GO" id="GO:0006370">
    <property type="term" value="P:7-methylguanosine mRNA capping"/>
    <property type="evidence" value="ECO:0007669"/>
    <property type="project" value="TreeGrafter"/>
</dbReference>
<dbReference type="GO" id="GO:0032259">
    <property type="term" value="P:methylation"/>
    <property type="evidence" value="ECO:0007669"/>
    <property type="project" value="UniProtKB-KW"/>
</dbReference>
<dbReference type="Gene3D" id="3.40.50.12760">
    <property type="match status" value="1"/>
</dbReference>
<dbReference type="InterPro" id="IPR025807">
    <property type="entry name" value="Adrift-typ_MeTrfase"/>
</dbReference>
<dbReference type="InterPro" id="IPR050851">
    <property type="entry name" value="mRNA_Cap_2O-Ribose_MeTrfase"/>
</dbReference>
<dbReference type="InterPro" id="IPR002877">
    <property type="entry name" value="RNA_MeTrfase_FtsJ_dom"/>
</dbReference>
<dbReference type="InterPro" id="IPR029063">
    <property type="entry name" value="SAM-dependent_MTases_sf"/>
</dbReference>
<dbReference type="PANTHER" id="PTHR16121">
    <property type="entry name" value="CAP-SPECIFIC MRNA (NUCLEOSIDE-2'-O-)-METHYLTRANSFERASE 1-RELATED"/>
    <property type="match status" value="1"/>
</dbReference>
<dbReference type="Pfam" id="PF01728">
    <property type="entry name" value="FtsJ"/>
    <property type="match status" value="1"/>
</dbReference>
<dbReference type="SUPFAM" id="SSF53335">
    <property type="entry name" value="S-adenosyl-L-methionine-dependent methyltransferases"/>
    <property type="match status" value="1"/>
</dbReference>
<dbReference type="PROSITE" id="PS51614">
    <property type="entry name" value="SAM_MT_ADRIFT"/>
    <property type="match status" value="1"/>
</dbReference>
<protein>
    <recommendedName>
        <fullName>Probable methyltransferase EP424R</fullName>
        <shortName>pEP424R</shortName>
        <ecNumber>2.1.1.-</ecNumber>
    </recommendedName>
</protein>
<evidence type="ECO:0000255" key="1">
    <source>
        <dbReference type="PROSITE-ProRule" id="PRU00946"/>
    </source>
</evidence>
<evidence type="ECO:0000269" key="2">
    <source>
    </source>
</evidence>
<evidence type="ECO:0000269" key="3">
    <source>
    </source>
</evidence>
<accession>Q65148</accession>